<organism>
    <name type="scientific">Heliobacterium modesticaldum (strain ATCC 51547 / Ice1)</name>
    <dbReference type="NCBI Taxonomy" id="498761"/>
    <lineage>
        <taxon>Bacteria</taxon>
        <taxon>Bacillati</taxon>
        <taxon>Bacillota</taxon>
        <taxon>Clostridia</taxon>
        <taxon>Eubacteriales</taxon>
        <taxon>Heliobacteriaceae</taxon>
        <taxon>Heliomicrobium</taxon>
    </lineage>
</organism>
<accession>B0TCA0</accession>
<evidence type="ECO:0000255" key="1">
    <source>
        <dbReference type="HAMAP-Rule" id="MF_00600"/>
    </source>
</evidence>
<proteinExistence type="inferred from homology"/>
<gene>
    <name evidence="1" type="primary">groEL</name>
    <name evidence="1" type="synonym">groL</name>
    <name type="ordered locus">Helmi_13740</name>
    <name type="ORF">HM1_1422</name>
</gene>
<feature type="chain" id="PRO_1000130022" description="Chaperonin GroEL">
    <location>
        <begin position="1"/>
        <end position="542"/>
    </location>
</feature>
<feature type="binding site" evidence="1">
    <location>
        <begin position="29"/>
        <end position="32"/>
    </location>
    <ligand>
        <name>ATP</name>
        <dbReference type="ChEBI" id="CHEBI:30616"/>
    </ligand>
</feature>
<feature type="binding site" evidence="1">
    <location>
        <begin position="86"/>
        <end position="90"/>
    </location>
    <ligand>
        <name>ATP</name>
        <dbReference type="ChEBI" id="CHEBI:30616"/>
    </ligand>
</feature>
<feature type="binding site" evidence="1">
    <location>
        <position position="413"/>
    </location>
    <ligand>
        <name>ATP</name>
        <dbReference type="ChEBI" id="CHEBI:30616"/>
    </ligand>
</feature>
<feature type="binding site" evidence="1">
    <location>
        <begin position="477"/>
        <end position="479"/>
    </location>
    <ligand>
        <name>ATP</name>
        <dbReference type="ChEBI" id="CHEBI:30616"/>
    </ligand>
</feature>
<feature type="binding site" evidence="1">
    <location>
        <position position="493"/>
    </location>
    <ligand>
        <name>ATP</name>
        <dbReference type="ChEBI" id="CHEBI:30616"/>
    </ligand>
</feature>
<protein>
    <recommendedName>
        <fullName evidence="1">Chaperonin GroEL</fullName>
        <ecNumber evidence="1">5.6.1.7</ecNumber>
    </recommendedName>
    <alternativeName>
        <fullName evidence="1">60 kDa chaperonin</fullName>
    </alternativeName>
    <alternativeName>
        <fullName evidence="1">Chaperonin-60</fullName>
        <shortName evidence="1">Cpn60</shortName>
    </alternativeName>
</protein>
<reference key="1">
    <citation type="journal article" date="2008" name="J. Bacteriol.">
        <title>The genome of Heliobacterium modesticaldum, a phototrophic representative of the Firmicutes containing the simplest photosynthetic apparatus.</title>
        <authorList>
            <person name="Sattley W.M."/>
            <person name="Madigan M.T."/>
            <person name="Swingley W.D."/>
            <person name="Cheung P.C."/>
            <person name="Clocksin K.M."/>
            <person name="Conrad A.L."/>
            <person name="Dejesa L.C."/>
            <person name="Honchak B.M."/>
            <person name="Jung D.O."/>
            <person name="Karbach L.E."/>
            <person name="Kurdoglu A."/>
            <person name="Lahiri S."/>
            <person name="Mastrian S.D."/>
            <person name="Page L.E."/>
            <person name="Taylor H.L."/>
            <person name="Wang Z.T."/>
            <person name="Raymond J."/>
            <person name="Chen M."/>
            <person name="Blankenship R.E."/>
            <person name="Touchman J.W."/>
        </authorList>
    </citation>
    <scope>NUCLEOTIDE SEQUENCE [LARGE SCALE GENOMIC DNA]</scope>
    <source>
        <strain>ATCC 51547 / Ice1</strain>
    </source>
</reference>
<comment type="function">
    <text evidence="1">Together with its co-chaperonin GroES, plays an essential role in assisting protein folding. The GroEL-GroES system forms a nano-cage that allows encapsulation of the non-native substrate proteins and provides a physical environment optimized to promote and accelerate protein folding.</text>
</comment>
<comment type="catalytic activity">
    <reaction evidence="1">
        <text>ATP + H2O + a folded polypeptide = ADP + phosphate + an unfolded polypeptide.</text>
        <dbReference type="EC" id="5.6.1.7"/>
    </reaction>
</comment>
<comment type="subunit">
    <text evidence="1">Forms a cylinder of 14 subunits composed of two heptameric rings stacked back-to-back. Interacts with the co-chaperonin GroES.</text>
</comment>
<comment type="subcellular location">
    <subcellularLocation>
        <location evidence="1">Cytoplasm</location>
    </subcellularLocation>
</comment>
<comment type="similarity">
    <text evidence="1">Belongs to the chaperonin (HSP60) family.</text>
</comment>
<sequence>MAKMIVFNEEARRALEKGVNTLAEAVRVTLGPKGRNVVLEKKFGSPLITNDGVTIAKEIELENPIENMGAQLVKEVATKTNDVAGDGTTTATILAQAIIREGMKNVAAGANPMVLKRGIEKAVEKAVAEIKAIAKPVESKEAIAQVAAISAGDATIGNLIAEAMEKVGKDGVITVEESKGFTTDLEVVEGMNFDRGYISPYMITDPDKMEAVLNDPYILITDKKISSVKDILPVLERVVQSGKQMVIIAEDVEGEALATLVVNKLRGTFTCVAVKAPGFGDRRKAMLEDIAILTGGRVVSEEVGIKLDSATIDMLGRARQVRIKKEETIIVDGAGRADDIKARIAQIRRQHEESTSEFDKEKLQERLAKLAGGVAVIQVGAATETELKDKKLRIEDALNATRAAVEEGIVPGGGTALVSIQKALDNVETPAGDEATGVAIIRRALEEPLRQIANNAGYEGSVVVEKVKSLPVGQGFNAATEVYEDMIAAGIVDPAKVTRSALQNAASIAAMLLTTEAIVADKPEKKDAPAMSPGMGGMDMGM</sequence>
<keyword id="KW-0067">ATP-binding</keyword>
<keyword id="KW-0143">Chaperone</keyword>
<keyword id="KW-0963">Cytoplasm</keyword>
<keyword id="KW-0413">Isomerase</keyword>
<keyword id="KW-0547">Nucleotide-binding</keyword>
<keyword id="KW-1185">Reference proteome</keyword>
<dbReference type="EC" id="5.6.1.7" evidence="1"/>
<dbReference type="EMBL" id="CP000930">
    <property type="protein sequence ID" value="ABZ83999.1"/>
    <property type="molecule type" value="Genomic_DNA"/>
</dbReference>
<dbReference type="RefSeq" id="WP_012282515.1">
    <property type="nucleotide sequence ID" value="NC_010337.2"/>
</dbReference>
<dbReference type="SMR" id="B0TCA0"/>
<dbReference type="STRING" id="498761.HM1_1422"/>
<dbReference type="KEGG" id="hmo:HM1_1422"/>
<dbReference type="eggNOG" id="COG0459">
    <property type="taxonomic scope" value="Bacteria"/>
</dbReference>
<dbReference type="HOGENOM" id="CLU_016503_3_0_9"/>
<dbReference type="OrthoDB" id="9766614at2"/>
<dbReference type="Proteomes" id="UP000008550">
    <property type="component" value="Chromosome"/>
</dbReference>
<dbReference type="GO" id="GO:0005737">
    <property type="term" value="C:cytoplasm"/>
    <property type="evidence" value="ECO:0007669"/>
    <property type="project" value="UniProtKB-SubCell"/>
</dbReference>
<dbReference type="GO" id="GO:0005524">
    <property type="term" value="F:ATP binding"/>
    <property type="evidence" value="ECO:0007669"/>
    <property type="project" value="UniProtKB-UniRule"/>
</dbReference>
<dbReference type="GO" id="GO:0140662">
    <property type="term" value="F:ATP-dependent protein folding chaperone"/>
    <property type="evidence" value="ECO:0007669"/>
    <property type="project" value="InterPro"/>
</dbReference>
<dbReference type="GO" id="GO:0016853">
    <property type="term" value="F:isomerase activity"/>
    <property type="evidence" value="ECO:0007669"/>
    <property type="project" value="UniProtKB-KW"/>
</dbReference>
<dbReference type="GO" id="GO:0051082">
    <property type="term" value="F:unfolded protein binding"/>
    <property type="evidence" value="ECO:0007669"/>
    <property type="project" value="UniProtKB-UniRule"/>
</dbReference>
<dbReference type="GO" id="GO:0042026">
    <property type="term" value="P:protein refolding"/>
    <property type="evidence" value="ECO:0007669"/>
    <property type="project" value="UniProtKB-UniRule"/>
</dbReference>
<dbReference type="CDD" id="cd03344">
    <property type="entry name" value="GroEL"/>
    <property type="match status" value="1"/>
</dbReference>
<dbReference type="FunFam" id="3.50.7.10:FF:000001">
    <property type="entry name" value="60 kDa chaperonin"/>
    <property type="match status" value="1"/>
</dbReference>
<dbReference type="Gene3D" id="3.50.7.10">
    <property type="entry name" value="GroEL"/>
    <property type="match status" value="1"/>
</dbReference>
<dbReference type="Gene3D" id="1.10.560.10">
    <property type="entry name" value="GroEL-like equatorial domain"/>
    <property type="match status" value="1"/>
</dbReference>
<dbReference type="Gene3D" id="3.30.260.10">
    <property type="entry name" value="TCP-1-like chaperonin intermediate domain"/>
    <property type="match status" value="1"/>
</dbReference>
<dbReference type="HAMAP" id="MF_00600">
    <property type="entry name" value="CH60"/>
    <property type="match status" value="1"/>
</dbReference>
<dbReference type="InterPro" id="IPR018370">
    <property type="entry name" value="Chaperonin_Cpn60_CS"/>
</dbReference>
<dbReference type="InterPro" id="IPR001844">
    <property type="entry name" value="Cpn60/GroEL"/>
</dbReference>
<dbReference type="InterPro" id="IPR002423">
    <property type="entry name" value="Cpn60/GroEL/TCP-1"/>
</dbReference>
<dbReference type="InterPro" id="IPR027409">
    <property type="entry name" value="GroEL-like_apical_dom_sf"/>
</dbReference>
<dbReference type="InterPro" id="IPR027413">
    <property type="entry name" value="GROEL-like_equatorial_sf"/>
</dbReference>
<dbReference type="InterPro" id="IPR027410">
    <property type="entry name" value="TCP-1-like_intermed_sf"/>
</dbReference>
<dbReference type="NCBIfam" id="TIGR02348">
    <property type="entry name" value="GroEL"/>
    <property type="match status" value="1"/>
</dbReference>
<dbReference type="NCBIfam" id="NF000592">
    <property type="entry name" value="PRK00013.1"/>
    <property type="match status" value="1"/>
</dbReference>
<dbReference type="NCBIfam" id="NF009487">
    <property type="entry name" value="PRK12849.1"/>
    <property type="match status" value="1"/>
</dbReference>
<dbReference type="NCBIfam" id="NF009488">
    <property type="entry name" value="PRK12850.1"/>
    <property type="match status" value="1"/>
</dbReference>
<dbReference type="NCBIfam" id="NF009489">
    <property type="entry name" value="PRK12851.1"/>
    <property type="match status" value="1"/>
</dbReference>
<dbReference type="PANTHER" id="PTHR45633">
    <property type="entry name" value="60 KDA HEAT SHOCK PROTEIN, MITOCHONDRIAL"/>
    <property type="match status" value="1"/>
</dbReference>
<dbReference type="Pfam" id="PF00118">
    <property type="entry name" value="Cpn60_TCP1"/>
    <property type="match status" value="1"/>
</dbReference>
<dbReference type="PRINTS" id="PR00298">
    <property type="entry name" value="CHAPERONIN60"/>
</dbReference>
<dbReference type="SUPFAM" id="SSF52029">
    <property type="entry name" value="GroEL apical domain-like"/>
    <property type="match status" value="1"/>
</dbReference>
<dbReference type="SUPFAM" id="SSF48592">
    <property type="entry name" value="GroEL equatorial domain-like"/>
    <property type="match status" value="1"/>
</dbReference>
<dbReference type="SUPFAM" id="SSF54849">
    <property type="entry name" value="GroEL-intermediate domain like"/>
    <property type="match status" value="1"/>
</dbReference>
<dbReference type="PROSITE" id="PS00296">
    <property type="entry name" value="CHAPERONINS_CPN60"/>
    <property type="match status" value="1"/>
</dbReference>
<name>CH60_HELMI</name>